<organism>
    <name type="scientific">Xenopus laevis</name>
    <name type="common">African clawed frog</name>
    <dbReference type="NCBI Taxonomy" id="8355"/>
    <lineage>
        <taxon>Eukaryota</taxon>
        <taxon>Metazoa</taxon>
        <taxon>Chordata</taxon>
        <taxon>Craniata</taxon>
        <taxon>Vertebrata</taxon>
        <taxon>Euteleostomi</taxon>
        <taxon>Amphibia</taxon>
        <taxon>Batrachia</taxon>
        <taxon>Anura</taxon>
        <taxon>Pipoidea</taxon>
        <taxon>Pipidae</taxon>
        <taxon>Xenopodinae</taxon>
        <taxon>Xenopus</taxon>
        <taxon>Xenopus</taxon>
    </lineage>
</organism>
<keyword id="KW-0256">Endoplasmic reticulum</keyword>
<keyword id="KW-0325">Glycoprotein</keyword>
<keyword id="KW-0333">Golgi apparatus</keyword>
<keyword id="KW-0378">Hydrolase</keyword>
<keyword id="KW-0472">Membrane</keyword>
<keyword id="KW-0914">Notch signaling pathway</keyword>
<keyword id="KW-0645">Protease</keyword>
<keyword id="KW-1185">Reference proteome</keyword>
<keyword id="KW-0812">Transmembrane</keyword>
<keyword id="KW-1133">Transmembrane helix</keyword>
<reference key="1">
    <citation type="journal article" date="1997" name="Biochem. Biophys. Res. Commun.">
        <title>Cloning of Xenopus presenilin-alpha and -beta cDNAs and their differential expression in oogenesis and embryogenesis.</title>
        <authorList>
            <person name="Tsujimura A."/>
            <person name="Yasojima K."/>
            <person name="Hashimoto-Gotoh T."/>
        </authorList>
    </citation>
    <scope>NUCLEOTIDE SEQUENCE [MRNA]</scope>
    <source>
        <tissue>Brain</tissue>
    </source>
</reference>
<reference key="2">
    <citation type="submission" date="2004-06" db="EMBL/GenBank/DDBJ databases">
        <authorList>
            <consortium name="NIH - Xenopus Gene Collection (XGC) project"/>
        </authorList>
    </citation>
    <scope>NUCLEOTIDE SEQUENCE [LARGE SCALE MRNA]</scope>
    <source>
        <tissue>Ovary</tissue>
    </source>
</reference>
<gene>
    <name type="primary">psen2</name>
</gene>
<sequence length="449" mass="50274">MIKLSDSEDEECNERTSLITSESPPLPSYQDGVQASEGLETSYHRERQPDSTQNNEDVPNGRTSGADAYNSETTVENEEEELTLKYGARHVIMLFVPVTLCMVVVVATIKSVSFYTEKDGQLIYTPFSEDTTSVGERLLNSVLNTLIMISVILVMTIFLVLLYKYRCYKFIHGWLILSSLMLLFMFTYIYLSEVFKTYNIAMDYPTLFMVIWNFGAVGMICIHWKGPLQLQQAYLIMISALMALVFIKYLPEWSAWVILGAISVYDLLAVLCPKGPLRMLVETAQERNEPIFPALIYSSAMMWTVGMADSATADGRMNQQVQHIDRNTPEGANSTVEDAAETRIQTQSNLSSEDPDEERGVKLGLGDFIFYSVLVGKAAATASGDWNTTLACFVAILIGLCLTLLLLAVFKKALPALPISITFGLIFYFSTDNIVRPFMDTLASHQMYI</sequence>
<proteinExistence type="evidence at transcript level"/>
<comment type="function">
    <text evidence="1">Probable catalytic subunit of the gamma-secretase complex, an endoprotease complex that catalyzes the intramembrane cleavage of integral membrane proteins such as Notch receptors (By similarity). May play a role in negative regulation of apoptotic cascades during oogenesis and embryogenesis, and in developmentally matured tissues such as brain tissue.</text>
</comment>
<comment type="subunit">
    <text evidence="4">Homodimer. Probable component of the gamma-secretase complex, a complex composed of a presenilin homodimer (PS-alpha or PS-beta), nicastrin (NCSTN), APH1 and PEN2 (Probable).</text>
</comment>
<comment type="subcellular location">
    <subcellularLocation>
        <location evidence="1">Endoplasmic reticulum membrane</location>
        <topology evidence="1">Multi-pass membrane protein</topology>
    </subcellularLocation>
    <subcellularLocation>
        <location evidence="1">Golgi apparatus membrane</location>
        <topology evidence="1">Multi-pass membrane protein</topology>
    </subcellularLocation>
</comment>
<comment type="tissue specificity">
    <text>Highest expression in ovaries and to a lesser extent in kidney, brain, eye and lung. Weak expression in testis, intestine, liver and heart. Present in trace amounts in skeletal muscle.</text>
</comment>
<comment type="developmental stage">
    <text>Abundant in early stages of oogenesis after which it is nearly constant.</text>
</comment>
<comment type="domain">
    <text evidence="1">The PAL motif is required for normal active site conformation.</text>
</comment>
<comment type="similarity">
    <text evidence="4">Belongs to the peptidase A22A family.</text>
</comment>
<protein>
    <recommendedName>
        <fullName>Presenilin-2</fullName>
        <shortName>PS-2</shortName>
        <ecNumber>3.4.23.-</ecNumber>
    </recommendedName>
    <alternativeName>
        <fullName>Presenilin beta</fullName>
        <shortName>PS-beta</shortName>
    </alternativeName>
</protein>
<feature type="chain" id="PRO_0000073900" description="Presenilin-2">
    <location>
        <begin position="1"/>
        <end position="449"/>
    </location>
</feature>
<feature type="topological domain" description="Cytoplasmic" evidence="2">
    <location>
        <begin position="1"/>
        <end position="90"/>
    </location>
</feature>
<feature type="transmembrane region" description="Helical" evidence="2">
    <location>
        <begin position="91"/>
        <end position="111"/>
    </location>
</feature>
<feature type="topological domain" description="Lumenal" evidence="2">
    <location>
        <begin position="112"/>
        <end position="141"/>
    </location>
</feature>
<feature type="transmembrane region" description="Helical" evidence="2">
    <location>
        <begin position="142"/>
        <end position="162"/>
    </location>
</feature>
<feature type="topological domain" description="Cytoplasmic" evidence="2">
    <location>
        <begin position="163"/>
        <end position="169"/>
    </location>
</feature>
<feature type="transmembrane region" description="Helical" evidence="2">
    <location>
        <begin position="170"/>
        <end position="190"/>
    </location>
</feature>
<feature type="topological domain" description="Lumenal" evidence="2">
    <location>
        <begin position="191"/>
        <end position="203"/>
    </location>
</feature>
<feature type="transmembrane region" description="Helical" evidence="2">
    <location>
        <begin position="204"/>
        <end position="224"/>
    </location>
</feature>
<feature type="topological domain" description="Cytoplasmic" evidence="2">
    <location>
        <begin position="225"/>
        <end position="226"/>
    </location>
</feature>
<feature type="transmembrane region" description="Helical" evidence="2">
    <location>
        <begin position="227"/>
        <end position="247"/>
    </location>
</feature>
<feature type="topological domain" description="Lumenal" evidence="2">
    <location>
        <begin position="248"/>
        <end position="252"/>
    </location>
</feature>
<feature type="transmembrane region" description="Helical" evidence="2">
    <location>
        <begin position="253"/>
        <end position="273"/>
    </location>
</feature>
<feature type="topological domain" description="Cytoplasmic" evidence="2">
    <location>
        <begin position="274"/>
        <end position="362"/>
    </location>
</feature>
<feature type="transmembrane region" description="Helical" evidence="2">
    <location>
        <begin position="363"/>
        <end position="383"/>
    </location>
</feature>
<feature type="topological domain" description="Lumenal" evidence="2">
    <location>
        <begin position="384"/>
        <end position="389"/>
    </location>
</feature>
<feature type="transmembrane region" description="Helical" evidence="2">
    <location>
        <begin position="390"/>
        <end position="410"/>
    </location>
</feature>
<feature type="topological domain" description="Cytoplasmic" evidence="2">
    <location>
        <begin position="411"/>
        <end position="414"/>
    </location>
</feature>
<feature type="intramembrane region" description="Helical" evidence="2">
    <location>
        <begin position="415"/>
        <end position="435"/>
    </location>
</feature>
<feature type="topological domain" description="Cytoplasmic" evidence="2">
    <location>
        <begin position="436"/>
        <end position="449"/>
    </location>
</feature>
<feature type="region of interest" description="Disordered" evidence="3">
    <location>
        <begin position="1"/>
        <end position="75"/>
    </location>
</feature>
<feature type="short sequence motif" description="PAL">
    <location>
        <begin position="415"/>
        <end position="417"/>
    </location>
</feature>
<feature type="compositionally biased region" description="Polar residues" evidence="3">
    <location>
        <begin position="50"/>
        <end position="63"/>
    </location>
</feature>
<feature type="active site" evidence="1">
    <location>
        <position position="266"/>
    </location>
</feature>
<feature type="active site" evidence="1">
    <location>
        <position position="367"/>
    </location>
</feature>
<feature type="glycosylation site" description="N-linked (GlcNAc...) asparagine" evidence="2">
    <location>
        <position position="387"/>
    </location>
</feature>
<name>PSN2_XENLA</name>
<dbReference type="EC" id="3.4.23.-"/>
<dbReference type="EMBL" id="D84428">
    <property type="protein sequence ID" value="BAA19571.1"/>
    <property type="molecule type" value="mRNA"/>
</dbReference>
<dbReference type="EMBL" id="BC072862">
    <property type="protein sequence ID" value="AAH72862.1"/>
    <property type="molecule type" value="mRNA"/>
</dbReference>
<dbReference type="PIR" id="JC5391">
    <property type="entry name" value="JC5391"/>
</dbReference>
<dbReference type="RefSeq" id="NP_001081211.1">
    <property type="nucleotide sequence ID" value="NM_001087742.1"/>
</dbReference>
<dbReference type="RefSeq" id="XP_018119744.1">
    <property type="nucleotide sequence ID" value="XM_018264255.1"/>
</dbReference>
<dbReference type="SMR" id="O12977"/>
<dbReference type="MEROPS" id="A22.002"/>
<dbReference type="GlyCosmos" id="O12977">
    <property type="glycosylation" value="1 site, No reported glycans"/>
</dbReference>
<dbReference type="DNASU" id="397713"/>
<dbReference type="GeneID" id="397713"/>
<dbReference type="KEGG" id="xla:397713"/>
<dbReference type="AGR" id="Xenbase:XB-GENE-6252626"/>
<dbReference type="CTD" id="397713"/>
<dbReference type="Xenbase" id="XB-GENE-6252626">
    <property type="gene designation" value="psen2.S"/>
</dbReference>
<dbReference type="OMA" id="WTTITFC"/>
<dbReference type="OrthoDB" id="20287at2759"/>
<dbReference type="Proteomes" id="UP000186698">
    <property type="component" value="Chromosome 5S"/>
</dbReference>
<dbReference type="Bgee" id="397713">
    <property type="expression patterns" value="Expressed in egg cell and 19 other cell types or tissues"/>
</dbReference>
<dbReference type="GO" id="GO:0005789">
    <property type="term" value="C:endoplasmic reticulum membrane"/>
    <property type="evidence" value="ECO:0007669"/>
    <property type="project" value="UniProtKB-SubCell"/>
</dbReference>
<dbReference type="GO" id="GO:0070765">
    <property type="term" value="C:gamma-secretase complex"/>
    <property type="evidence" value="ECO:0000318"/>
    <property type="project" value="GO_Central"/>
</dbReference>
<dbReference type="GO" id="GO:0000139">
    <property type="term" value="C:Golgi membrane"/>
    <property type="evidence" value="ECO:0007669"/>
    <property type="project" value="UniProtKB-SubCell"/>
</dbReference>
<dbReference type="GO" id="GO:0042500">
    <property type="term" value="F:aspartic endopeptidase activity, intramembrane cleaving"/>
    <property type="evidence" value="ECO:0000318"/>
    <property type="project" value="GO_Central"/>
</dbReference>
<dbReference type="GO" id="GO:0034205">
    <property type="term" value="P:amyloid-beta formation"/>
    <property type="evidence" value="ECO:0000318"/>
    <property type="project" value="GO_Central"/>
</dbReference>
<dbReference type="GO" id="GO:0055074">
    <property type="term" value="P:calcium ion homeostasis"/>
    <property type="evidence" value="ECO:0000318"/>
    <property type="project" value="GO_Central"/>
</dbReference>
<dbReference type="GO" id="GO:0006509">
    <property type="term" value="P:membrane protein ectodomain proteolysis"/>
    <property type="evidence" value="ECO:0000318"/>
    <property type="project" value="GO_Central"/>
</dbReference>
<dbReference type="GO" id="GO:0007219">
    <property type="term" value="P:Notch signaling pathway"/>
    <property type="evidence" value="ECO:0000318"/>
    <property type="project" value="GO_Central"/>
</dbReference>
<dbReference type="GO" id="GO:0016485">
    <property type="term" value="P:protein processing"/>
    <property type="evidence" value="ECO:0000318"/>
    <property type="project" value="GO_Central"/>
</dbReference>
<dbReference type="FunFam" id="1.10.472.100:FF:000001">
    <property type="entry name" value="Presenilin"/>
    <property type="match status" value="1"/>
</dbReference>
<dbReference type="Gene3D" id="1.10.472.100">
    <property type="entry name" value="Presenilin"/>
    <property type="match status" value="1"/>
</dbReference>
<dbReference type="InterPro" id="IPR001108">
    <property type="entry name" value="Peptidase_A22A"/>
</dbReference>
<dbReference type="InterPro" id="IPR006639">
    <property type="entry name" value="Preselin/SPP"/>
</dbReference>
<dbReference type="InterPro" id="IPR042524">
    <property type="entry name" value="Presenilin_C"/>
</dbReference>
<dbReference type="PANTHER" id="PTHR10202">
    <property type="entry name" value="PRESENILIN"/>
    <property type="match status" value="1"/>
</dbReference>
<dbReference type="PANTHER" id="PTHR10202:SF24">
    <property type="entry name" value="PRESENILIN-2"/>
    <property type="match status" value="1"/>
</dbReference>
<dbReference type="Pfam" id="PF01080">
    <property type="entry name" value="Presenilin"/>
    <property type="match status" value="1"/>
</dbReference>
<dbReference type="PRINTS" id="PR01072">
    <property type="entry name" value="PRESENILIN"/>
</dbReference>
<dbReference type="SMART" id="SM00730">
    <property type="entry name" value="PSN"/>
    <property type="match status" value="1"/>
</dbReference>
<evidence type="ECO:0000250" key="1"/>
<evidence type="ECO:0000255" key="2"/>
<evidence type="ECO:0000256" key="3">
    <source>
        <dbReference type="SAM" id="MobiDB-lite"/>
    </source>
</evidence>
<evidence type="ECO:0000305" key="4"/>
<accession>O12977</accession>
<accession>Q6GQ85</accession>